<proteinExistence type="inferred from homology"/>
<name>RNZ_BACTN</name>
<keyword id="KW-0255">Endonuclease</keyword>
<keyword id="KW-0378">Hydrolase</keyword>
<keyword id="KW-0479">Metal-binding</keyword>
<keyword id="KW-0540">Nuclease</keyword>
<keyword id="KW-1185">Reference proteome</keyword>
<keyword id="KW-0819">tRNA processing</keyword>
<keyword id="KW-0862">Zinc</keyword>
<reference key="1">
    <citation type="journal article" date="2003" name="Science">
        <title>A genomic view of the human-Bacteroides thetaiotaomicron symbiosis.</title>
        <authorList>
            <person name="Xu J."/>
            <person name="Bjursell M.K."/>
            <person name="Himrod J."/>
            <person name="Deng S."/>
            <person name="Carmichael L.K."/>
            <person name="Chiang H.C."/>
            <person name="Hooper L.V."/>
            <person name="Gordon J.I."/>
        </authorList>
    </citation>
    <scope>NUCLEOTIDE SEQUENCE [LARGE SCALE GENOMIC DNA]</scope>
    <source>
        <strain>ATCC 29148 / DSM 2079 / JCM 5827 / CCUG 10774 / NCTC 10582 / VPI-5482 / E50</strain>
    </source>
</reference>
<organism>
    <name type="scientific">Bacteroides thetaiotaomicron (strain ATCC 29148 / DSM 2079 / JCM 5827 / CCUG 10774 / NCTC 10582 / VPI-5482 / E50)</name>
    <dbReference type="NCBI Taxonomy" id="226186"/>
    <lineage>
        <taxon>Bacteria</taxon>
        <taxon>Pseudomonadati</taxon>
        <taxon>Bacteroidota</taxon>
        <taxon>Bacteroidia</taxon>
        <taxon>Bacteroidales</taxon>
        <taxon>Bacteroidaceae</taxon>
        <taxon>Bacteroides</taxon>
    </lineage>
</organism>
<accession>Q89ZN1</accession>
<comment type="function">
    <text evidence="1">Zinc phosphodiesterase, which displays some tRNA 3'-processing endonuclease activity. Probably involved in tRNA maturation, by removing a 3'-trailer from precursor tRNA.</text>
</comment>
<comment type="catalytic activity">
    <reaction evidence="1">
        <text>Endonucleolytic cleavage of RNA, removing extra 3' nucleotides from tRNA precursor, generating 3' termini of tRNAs. A 3'-hydroxy group is left at the tRNA terminus and a 5'-phosphoryl group is left at the trailer molecule.</text>
        <dbReference type="EC" id="3.1.26.11"/>
    </reaction>
</comment>
<comment type="cofactor">
    <cofactor evidence="1">
        <name>Zn(2+)</name>
        <dbReference type="ChEBI" id="CHEBI:29105"/>
    </cofactor>
    <text evidence="1">Binds 2 Zn(2+) ions.</text>
</comment>
<comment type="subunit">
    <text evidence="1">Homodimer.</text>
</comment>
<comment type="similarity">
    <text evidence="1">Belongs to the RNase Z family.</text>
</comment>
<protein>
    <recommendedName>
        <fullName evidence="1">Ribonuclease Z</fullName>
        <shortName evidence="1">RNase Z</shortName>
        <ecNumber evidence="1">3.1.26.11</ecNumber>
    </recommendedName>
    <alternativeName>
        <fullName evidence="1">tRNA 3 endonuclease</fullName>
    </alternativeName>
    <alternativeName>
        <fullName evidence="1">tRNase Z</fullName>
    </alternativeName>
</protein>
<dbReference type="EC" id="3.1.26.11" evidence="1"/>
<dbReference type="EMBL" id="AE015928">
    <property type="protein sequence ID" value="AAO79451.1"/>
    <property type="molecule type" value="Genomic_DNA"/>
</dbReference>
<dbReference type="RefSeq" id="NP_813257.1">
    <property type="nucleotide sequence ID" value="NC_004663.1"/>
</dbReference>
<dbReference type="RefSeq" id="WP_011109212.1">
    <property type="nucleotide sequence ID" value="NC_004663.1"/>
</dbReference>
<dbReference type="SMR" id="Q89ZN1"/>
<dbReference type="FunCoup" id="Q89ZN1">
    <property type="interactions" value="361"/>
</dbReference>
<dbReference type="STRING" id="226186.BT_4346"/>
<dbReference type="PaxDb" id="226186-BT_4346"/>
<dbReference type="EnsemblBacteria" id="AAO79451">
    <property type="protein sequence ID" value="AAO79451"/>
    <property type="gene ID" value="BT_4346"/>
</dbReference>
<dbReference type="GeneID" id="60925523"/>
<dbReference type="KEGG" id="bth:BT_4346"/>
<dbReference type="PATRIC" id="fig|226186.12.peg.4423"/>
<dbReference type="eggNOG" id="COG1234">
    <property type="taxonomic scope" value="Bacteria"/>
</dbReference>
<dbReference type="HOGENOM" id="CLU_031317_2_1_10"/>
<dbReference type="InParanoid" id="Q89ZN1"/>
<dbReference type="OrthoDB" id="9800940at2"/>
<dbReference type="Proteomes" id="UP000001414">
    <property type="component" value="Chromosome"/>
</dbReference>
<dbReference type="GO" id="GO:0042781">
    <property type="term" value="F:3'-tRNA processing endoribonuclease activity"/>
    <property type="evidence" value="ECO:0000318"/>
    <property type="project" value="GO_Central"/>
</dbReference>
<dbReference type="GO" id="GO:0008270">
    <property type="term" value="F:zinc ion binding"/>
    <property type="evidence" value="ECO:0007669"/>
    <property type="project" value="UniProtKB-UniRule"/>
</dbReference>
<dbReference type="CDD" id="cd07717">
    <property type="entry name" value="RNaseZ_ZiPD-like_MBL-fold"/>
    <property type="match status" value="1"/>
</dbReference>
<dbReference type="Gene3D" id="3.60.15.10">
    <property type="entry name" value="Ribonuclease Z/Hydroxyacylglutathione hydrolase-like"/>
    <property type="match status" value="1"/>
</dbReference>
<dbReference type="HAMAP" id="MF_01818">
    <property type="entry name" value="RNase_Z_BN"/>
    <property type="match status" value="1"/>
</dbReference>
<dbReference type="InterPro" id="IPR001279">
    <property type="entry name" value="Metallo-B-lactamas"/>
</dbReference>
<dbReference type="InterPro" id="IPR036866">
    <property type="entry name" value="RibonucZ/Hydroxyglut_hydro"/>
</dbReference>
<dbReference type="InterPro" id="IPR013471">
    <property type="entry name" value="RNase_Z/BN"/>
</dbReference>
<dbReference type="NCBIfam" id="NF000801">
    <property type="entry name" value="PRK00055.1-3"/>
    <property type="match status" value="1"/>
</dbReference>
<dbReference type="NCBIfam" id="TIGR02651">
    <property type="entry name" value="RNase_Z"/>
    <property type="match status" value="1"/>
</dbReference>
<dbReference type="PANTHER" id="PTHR46018">
    <property type="entry name" value="ZINC PHOSPHODIESTERASE ELAC PROTEIN 1"/>
    <property type="match status" value="1"/>
</dbReference>
<dbReference type="PANTHER" id="PTHR46018:SF2">
    <property type="entry name" value="ZINC PHOSPHODIESTERASE ELAC PROTEIN 1"/>
    <property type="match status" value="1"/>
</dbReference>
<dbReference type="Pfam" id="PF12706">
    <property type="entry name" value="Lactamase_B_2"/>
    <property type="match status" value="1"/>
</dbReference>
<dbReference type="SUPFAM" id="SSF56281">
    <property type="entry name" value="Metallo-hydrolase/oxidoreductase"/>
    <property type="match status" value="1"/>
</dbReference>
<feature type="chain" id="PRO_0000155850" description="Ribonuclease Z">
    <location>
        <begin position="1"/>
        <end position="316"/>
    </location>
</feature>
<feature type="active site" description="Proton acceptor" evidence="1">
    <location>
        <position position="67"/>
    </location>
</feature>
<feature type="binding site" evidence="1">
    <location>
        <position position="63"/>
    </location>
    <ligand>
        <name>Zn(2+)</name>
        <dbReference type="ChEBI" id="CHEBI:29105"/>
        <label>1</label>
        <note>catalytic</note>
    </ligand>
</feature>
<feature type="binding site" evidence="1">
    <location>
        <position position="65"/>
    </location>
    <ligand>
        <name>Zn(2+)</name>
        <dbReference type="ChEBI" id="CHEBI:29105"/>
        <label>1</label>
        <note>catalytic</note>
    </ligand>
</feature>
<feature type="binding site" evidence="1">
    <location>
        <position position="67"/>
    </location>
    <ligand>
        <name>Zn(2+)</name>
        <dbReference type="ChEBI" id="CHEBI:29105"/>
        <label>2</label>
        <note>catalytic</note>
    </ligand>
</feature>
<feature type="binding site" evidence="1">
    <location>
        <position position="68"/>
    </location>
    <ligand>
        <name>Zn(2+)</name>
        <dbReference type="ChEBI" id="CHEBI:29105"/>
        <label>2</label>
        <note>catalytic</note>
    </ligand>
</feature>
<feature type="binding site" evidence="1">
    <location>
        <position position="143"/>
    </location>
    <ligand>
        <name>Zn(2+)</name>
        <dbReference type="ChEBI" id="CHEBI:29105"/>
        <label>1</label>
        <note>catalytic</note>
    </ligand>
</feature>
<feature type="binding site" evidence="1">
    <location>
        <position position="213"/>
    </location>
    <ligand>
        <name>Zn(2+)</name>
        <dbReference type="ChEBI" id="CHEBI:29105"/>
        <label>1</label>
        <note>catalytic</note>
    </ligand>
</feature>
<feature type="binding site" evidence="1">
    <location>
        <position position="213"/>
    </location>
    <ligand>
        <name>Zn(2+)</name>
        <dbReference type="ChEBI" id="CHEBI:29105"/>
        <label>2</label>
        <note>catalytic</note>
    </ligand>
</feature>
<feature type="binding site" evidence="1">
    <location>
        <position position="271"/>
    </location>
    <ligand>
        <name>Zn(2+)</name>
        <dbReference type="ChEBI" id="CHEBI:29105"/>
        <label>2</label>
        <note>catalytic</note>
    </ligand>
</feature>
<evidence type="ECO:0000255" key="1">
    <source>
        <dbReference type="HAMAP-Rule" id="MF_01818"/>
    </source>
</evidence>
<gene>
    <name evidence="1" type="primary">rnz</name>
    <name type="ordered locus">BT_4346</name>
</gene>
<sequence>MEKFELHILGCGSALPTTRHFATSQVVNLREKLFMIDCGEGAQMQLRRSRLKFSRLNHIFISHLHGDHCFGLLGLISTFGLLGRTADLHIHSPKGLEELFAPLLSFFCKTLAYKVFFHEFETKEPTLIYDDRSVAVTTIPLRHRIPCCGFLFEEKQRPNHIIRDMVDFYKVPVYELNRIKNGADFVTPEGEVIPNHRLTRPSAPARKYAYCSDTIYRPEIVEQIKGIDLLFHEATFAQTEQVRAKETHHTTAAQAAQIALNAEVKQLVIGHFSARYEDESVLLNEAAAIFPQTVLARENMCITINNYTDTRDYDPL</sequence>